<feature type="chain" id="PRO_1000013629" description="Ion-translocating oxidoreductase complex subunit D">
    <location>
        <begin position="1"/>
        <end position="349"/>
    </location>
</feature>
<feature type="transmembrane region" description="Helical" evidence="1">
    <location>
        <begin position="36"/>
        <end position="56"/>
    </location>
</feature>
<feature type="transmembrane region" description="Helical" evidence="1">
    <location>
        <begin position="77"/>
        <end position="99"/>
    </location>
</feature>
<feature type="transmembrane region" description="Helical" evidence="1">
    <location>
        <begin position="124"/>
        <end position="144"/>
    </location>
</feature>
<feature type="transmembrane region" description="Helical" evidence="1">
    <location>
        <begin position="212"/>
        <end position="232"/>
    </location>
</feature>
<feature type="transmembrane region" description="Helical" evidence="1">
    <location>
        <begin position="239"/>
        <end position="259"/>
    </location>
</feature>
<feature type="transmembrane region" description="Helical" evidence="1">
    <location>
        <begin position="265"/>
        <end position="285"/>
    </location>
</feature>
<feature type="transmembrane region" description="Helical" evidence="1">
    <location>
        <begin position="291"/>
        <end position="311"/>
    </location>
</feature>
<feature type="transmembrane region" description="Helical" evidence="1">
    <location>
        <begin position="315"/>
        <end position="335"/>
    </location>
</feature>
<feature type="modified residue" description="FMN phosphoryl threonine" evidence="1">
    <location>
        <position position="185"/>
    </location>
</feature>
<organism>
    <name type="scientific">Shewanella oneidensis (strain ATCC 700550 / JCM 31522 / CIP 106686 / LMG 19005 / NCIMB 14063 / MR-1)</name>
    <dbReference type="NCBI Taxonomy" id="211586"/>
    <lineage>
        <taxon>Bacteria</taxon>
        <taxon>Pseudomonadati</taxon>
        <taxon>Pseudomonadota</taxon>
        <taxon>Gammaproteobacteria</taxon>
        <taxon>Alteromonadales</taxon>
        <taxon>Shewanellaceae</taxon>
        <taxon>Shewanella</taxon>
    </lineage>
</organism>
<evidence type="ECO:0000255" key="1">
    <source>
        <dbReference type="HAMAP-Rule" id="MF_00462"/>
    </source>
</evidence>
<comment type="function">
    <text evidence="1">Part of a membrane-bound complex that couples electron transfer with translocation of ions across the membrane.</text>
</comment>
<comment type="cofactor">
    <cofactor evidence="1">
        <name>FMN</name>
        <dbReference type="ChEBI" id="CHEBI:58210"/>
    </cofactor>
</comment>
<comment type="subunit">
    <text evidence="1">The complex is composed of six subunits: RnfA, RnfB, RnfC, RnfD, RnfE and RnfG.</text>
</comment>
<comment type="subcellular location">
    <subcellularLocation>
        <location evidence="1">Cell inner membrane</location>
        <topology evidence="1">Multi-pass membrane protein</topology>
    </subcellularLocation>
</comment>
<comment type="similarity">
    <text evidence="1">Belongs to the NqrB/RnfD family.</text>
</comment>
<keyword id="KW-0997">Cell inner membrane</keyword>
<keyword id="KW-1003">Cell membrane</keyword>
<keyword id="KW-0249">Electron transport</keyword>
<keyword id="KW-0285">Flavoprotein</keyword>
<keyword id="KW-0288">FMN</keyword>
<keyword id="KW-0472">Membrane</keyword>
<keyword id="KW-0597">Phosphoprotein</keyword>
<keyword id="KW-1185">Reference proteome</keyword>
<keyword id="KW-1278">Translocase</keyword>
<keyword id="KW-0812">Transmembrane</keyword>
<keyword id="KW-1133">Transmembrane helix</keyword>
<keyword id="KW-0813">Transport</keyword>
<protein>
    <recommendedName>
        <fullName evidence="1">Ion-translocating oxidoreductase complex subunit D</fullName>
        <ecNumber evidence="1">7.-.-.-</ecNumber>
    </recommendedName>
    <alternativeName>
        <fullName evidence="1">Rnf electron transport complex subunit D</fullName>
    </alternativeName>
</protein>
<gene>
    <name evidence="1" type="primary">rnfD</name>
    <name type="ordered locus">SO_2511</name>
</gene>
<accession>Q8EE78</accession>
<proteinExistence type="inferred from homology"/>
<sequence>MAFKIASSPHVTRNLQTSTVMQRVILCLLPGLVVQCAFFGWGTLIQVLLAIIVALSCEAAVMKLRKRSIKASLGDNSAMLTAILIGVAIPPLAPWWMIVMGTAFAIVIVKHLYGGLGHNLFNPAMAAYVLLLVSFPLQMTTWIAPSTVALNTPSIVDSLQLIFNVGAHVGMEQFRLGIDGISMATPLDTLKTDLSLGLTTTESMAKSIFDGSTGVGWFWVNLAYLAGGIVLLKLKAIRWHISTGVLAGLFVASSVGFLLSPDTHASPLFHLFSGATMLAAFFIATDPVTAATSPRGRIIFGALIGVLVYIIRTQGGYPDAFAFAVLLANLCAPFIDYYVRPRTYGHSAG</sequence>
<name>RNFD_SHEON</name>
<dbReference type="EC" id="7.-.-.-" evidence="1"/>
<dbReference type="EMBL" id="AE014299">
    <property type="protein sequence ID" value="AAN55542.1"/>
    <property type="molecule type" value="Genomic_DNA"/>
</dbReference>
<dbReference type="RefSeq" id="NP_718098.1">
    <property type="nucleotide sequence ID" value="NC_004347.2"/>
</dbReference>
<dbReference type="RefSeq" id="WP_011072474.1">
    <property type="nucleotide sequence ID" value="NC_004347.2"/>
</dbReference>
<dbReference type="SMR" id="Q8EE78"/>
<dbReference type="STRING" id="211586.SO_2511"/>
<dbReference type="PaxDb" id="211586-SO_2511"/>
<dbReference type="KEGG" id="son:SO_2511"/>
<dbReference type="PATRIC" id="fig|211586.12.peg.2417"/>
<dbReference type="eggNOG" id="COG4658">
    <property type="taxonomic scope" value="Bacteria"/>
</dbReference>
<dbReference type="HOGENOM" id="CLU_042020_0_0_6"/>
<dbReference type="OrthoDB" id="9776359at2"/>
<dbReference type="PhylomeDB" id="Q8EE78"/>
<dbReference type="BioCyc" id="SONE211586:G1GMP-2302-MONOMER"/>
<dbReference type="Proteomes" id="UP000008186">
    <property type="component" value="Chromosome"/>
</dbReference>
<dbReference type="GO" id="GO:0005886">
    <property type="term" value="C:plasma membrane"/>
    <property type="evidence" value="ECO:0000318"/>
    <property type="project" value="GO_Central"/>
</dbReference>
<dbReference type="GO" id="GO:0022900">
    <property type="term" value="P:electron transport chain"/>
    <property type="evidence" value="ECO:0007669"/>
    <property type="project" value="UniProtKB-UniRule"/>
</dbReference>
<dbReference type="GO" id="GO:0055085">
    <property type="term" value="P:transmembrane transport"/>
    <property type="evidence" value="ECO:0007669"/>
    <property type="project" value="InterPro"/>
</dbReference>
<dbReference type="HAMAP" id="MF_00462">
    <property type="entry name" value="RsxD_RnfD"/>
    <property type="match status" value="1"/>
</dbReference>
<dbReference type="InterPro" id="IPR004338">
    <property type="entry name" value="NqrB/RnfD"/>
</dbReference>
<dbReference type="InterPro" id="IPR011303">
    <property type="entry name" value="RnfD_bac"/>
</dbReference>
<dbReference type="NCBIfam" id="NF002011">
    <property type="entry name" value="PRK00816.1"/>
    <property type="match status" value="1"/>
</dbReference>
<dbReference type="NCBIfam" id="TIGR01946">
    <property type="entry name" value="rnfD"/>
    <property type="match status" value="1"/>
</dbReference>
<dbReference type="PANTHER" id="PTHR30578">
    <property type="entry name" value="ELECTRON TRANSPORT COMPLEX PROTEIN RNFD"/>
    <property type="match status" value="1"/>
</dbReference>
<dbReference type="PANTHER" id="PTHR30578:SF0">
    <property type="entry name" value="ION-TRANSLOCATING OXIDOREDUCTASE COMPLEX SUBUNIT D"/>
    <property type="match status" value="1"/>
</dbReference>
<dbReference type="Pfam" id="PF03116">
    <property type="entry name" value="NQR2_RnfD_RnfE"/>
    <property type="match status" value="1"/>
</dbReference>
<reference key="1">
    <citation type="journal article" date="2002" name="Nat. Biotechnol.">
        <title>Genome sequence of the dissimilatory metal ion-reducing bacterium Shewanella oneidensis.</title>
        <authorList>
            <person name="Heidelberg J.F."/>
            <person name="Paulsen I.T."/>
            <person name="Nelson K.E."/>
            <person name="Gaidos E.J."/>
            <person name="Nelson W.C."/>
            <person name="Read T.D."/>
            <person name="Eisen J.A."/>
            <person name="Seshadri R."/>
            <person name="Ward N.L."/>
            <person name="Methe B.A."/>
            <person name="Clayton R.A."/>
            <person name="Meyer T."/>
            <person name="Tsapin A."/>
            <person name="Scott J."/>
            <person name="Beanan M.J."/>
            <person name="Brinkac L.M."/>
            <person name="Daugherty S.C."/>
            <person name="DeBoy R.T."/>
            <person name="Dodson R.J."/>
            <person name="Durkin A.S."/>
            <person name="Haft D.H."/>
            <person name="Kolonay J.F."/>
            <person name="Madupu R."/>
            <person name="Peterson J.D."/>
            <person name="Umayam L.A."/>
            <person name="White O."/>
            <person name="Wolf A.M."/>
            <person name="Vamathevan J.J."/>
            <person name="Weidman J.F."/>
            <person name="Impraim M."/>
            <person name="Lee K."/>
            <person name="Berry K.J."/>
            <person name="Lee C."/>
            <person name="Mueller J."/>
            <person name="Khouri H.M."/>
            <person name="Gill J."/>
            <person name="Utterback T.R."/>
            <person name="McDonald L.A."/>
            <person name="Feldblyum T.V."/>
            <person name="Smith H.O."/>
            <person name="Venter J.C."/>
            <person name="Nealson K.H."/>
            <person name="Fraser C.M."/>
        </authorList>
    </citation>
    <scope>NUCLEOTIDE SEQUENCE [LARGE SCALE GENOMIC DNA]</scope>
    <source>
        <strain>ATCC 700550 / JCM 31522 / CIP 106686 / LMG 19005 / NCIMB 14063 / MR-1</strain>
    </source>
</reference>